<keyword id="KW-0067">ATP-binding</keyword>
<keyword id="KW-0903">Direct protein sequencing</keyword>
<keyword id="KW-0418">Kinase</keyword>
<keyword id="KW-0547">Nucleotide-binding</keyword>
<keyword id="KW-1185">Reference proteome</keyword>
<keyword id="KW-0784">Thiamine biosynthesis</keyword>
<keyword id="KW-0808">Transferase</keyword>
<sequence length="275" mass="28565">MNYLPLAPPGMTPPRVLSIAGSDSGGGAGIQADMRTMALLGVHACVAVTAVTVQNTLGVKDIHEVPNDVVAGQIEAVVTDIGVQAAKTGMLASSRIVATVAATWRRLELSVPLVVDPVCASMHGDPLLAPSALDSLRGQLFPLATLLTPNLDEARLLVDIEVVDAESQRAAAKALHALGPQWVLVKGGHLRSSDGSCDLLYDGVSCYQFDAQRLPTGDDHGGGDTLATAIAAALAHGFTVPDAVDFGKRWVTECLRAAYPLGRGHGPVSPLFRLS</sequence>
<proteinExistence type="evidence at protein level"/>
<accession>P9WG77</accession>
<accession>L0T6F0</accession>
<accession>P66913</accession>
<accession>P96268</accession>
<name>THID_MYCTU</name>
<organism>
    <name type="scientific">Mycobacterium tuberculosis (strain ATCC 25618 / H37Rv)</name>
    <dbReference type="NCBI Taxonomy" id="83332"/>
    <lineage>
        <taxon>Bacteria</taxon>
        <taxon>Bacillati</taxon>
        <taxon>Actinomycetota</taxon>
        <taxon>Actinomycetes</taxon>
        <taxon>Mycobacteriales</taxon>
        <taxon>Mycobacteriaceae</taxon>
        <taxon>Mycobacterium</taxon>
        <taxon>Mycobacterium tuberculosis complex</taxon>
    </lineage>
</organism>
<evidence type="ECO:0000250" key="1"/>
<evidence type="ECO:0000250" key="2">
    <source>
        <dbReference type="UniProtKB" id="P76422"/>
    </source>
</evidence>
<evidence type="ECO:0000269" key="3">
    <source>
    </source>
</evidence>
<evidence type="ECO:0000305" key="4"/>
<feature type="initiator methionine" description="Removed" evidence="3">
    <location>
        <position position="1"/>
    </location>
</feature>
<feature type="chain" id="PRO_0000192023" description="Hydroxymethylpyrimidine/phosphomethylpyrimidine kinase">
    <location>
        <begin position="2"/>
        <end position="275"/>
    </location>
</feature>
<feature type="binding site" evidence="1">
    <location>
        <position position="54"/>
    </location>
    <ligand>
        <name>4-amino-5-hydroxymethyl-2-methylpyrimidine</name>
        <dbReference type="ChEBI" id="CHEBI:16892"/>
    </ligand>
</feature>
<dbReference type="EC" id="2.7.1.49" evidence="2"/>
<dbReference type="EC" id="2.7.4.7" evidence="2"/>
<dbReference type="EMBL" id="AL123456">
    <property type="protein sequence ID" value="CCP43153.1"/>
    <property type="status" value="ALT_INIT"/>
    <property type="molecule type" value="Genomic_DNA"/>
</dbReference>
<dbReference type="PIR" id="D70630">
    <property type="entry name" value="D70630"/>
</dbReference>
<dbReference type="RefSeq" id="NP_214936.1">
    <property type="nucleotide sequence ID" value="NC_000962.3"/>
</dbReference>
<dbReference type="RefSeq" id="WP_003402147.1">
    <property type="nucleotide sequence ID" value="NC_000962.3"/>
</dbReference>
<dbReference type="RefSeq" id="WP_003898443.1">
    <property type="nucleotide sequence ID" value="NZ_NVQJ01000002.1"/>
</dbReference>
<dbReference type="SMR" id="P9WG77"/>
<dbReference type="FunCoup" id="P9WG77">
    <property type="interactions" value="209"/>
</dbReference>
<dbReference type="STRING" id="83332.Rv0422c"/>
<dbReference type="PaxDb" id="83332-Rv0422c"/>
<dbReference type="DNASU" id="886375"/>
<dbReference type="GeneID" id="886375"/>
<dbReference type="KEGG" id="mtu:Rv0422c"/>
<dbReference type="PATRIC" id="fig|83332.111.peg.463"/>
<dbReference type="TubercuList" id="Rv0422c"/>
<dbReference type="eggNOG" id="COG0351">
    <property type="taxonomic scope" value="Bacteria"/>
</dbReference>
<dbReference type="InParanoid" id="P9WG77"/>
<dbReference type="OrthoDB" id="34166at2"/>
<dbReference type="PhylomeDB" id="P9WG77"/>
<dbReference type="UniPathway" id="UPA00060">
    <property type="reaction ID" value="UER00137"/>
</dbReference>
<dbReference type="UniPathway" id="UPA00060">
    <property type="reaction ID" value="UER00138"/>
</dbReference>
<dbReference type="Proteomes" id="UP000001584">
    <property type="component" value="Chromosome"/>
</dbReference>
<dbReference type="GO" id="GO:0005829">
    <property type="term" value="C:cytosol"/>
    <property type="evidence" value="ECO:0000318"/>
    <property type="project" value="GO_Central"/>
</dbReference>
<dbReference type="GO" id="GO:0005524">
    <property type="term" value="F:ATP binding"/>
    <property type="evidence" value="ECO:0007669"/>
    <property type="project" value="UniProtKB-KW"/>
</dbReference>
<dbReference type="GO" id="GO:0008902">
    <property type="term" value="F:hydroxymethylpyrimidine kinase activity"/>
    <property type="evidence" value="ECO:0000318"/>
    <property type="project" value="GO_Central"/>
</dbReference>
<dbReference type="GO" id="GO:0008972">
    <property type="term" value="F:phosphomethylpyrimidine kinase activity"/>
    <property type="evidence" value="ECO:0000318"/>
    <property type="project" value="GO_Central"/>
</dbReference>
<dbReference type="GO" id="GO:0009228">
    <property type="term" value="P:thiamine biosynthetic process"/>
    <property type="evidence" value="ECO:0000318"/>
    <property type="project" value="GO_Central"/>
</dbReference>
<dbReference type="GO" id="GO:0009229">
    <property type="term" value="P:thiamine diphosphate biosynthetic process"/>
    <property type="evidence" value="ECO:0007669"/>
    <property type="project" value="UniProtKB-UniPathway"/>
</dbReference>
<dbReference type="CDD" id="cd01169">
    <property type="entry name" value="HMPP_kinase"/>
    <property type="match status" value="1"/>
</dbReference>
<dbReference type="FunFam" id="3.40.1190.20:FF:000003">
    <property type="entry name" value="Phosphomethylpyrimidine kinase ThiD"/>
    <property type="match status" value="1"/>
</dbReference>
<dbReference type="Gene3D" id="3.40.1190.20">
    <property type="match status" value="1"/>
</dbReference>
<dbReference type="InterPro" id="IPR004399">
    <property type="entry name" value="HMP/HMP-P_kinase_dom"/>
</dbReference>
<dbReference type="InterPro" id="IPR013749">
    <property type="entry name" value="PM/HMP-P_kinase-1"/>
</dbReference>
<dbReference type="InterPro" id="IPR029056">
    <property type="entry name" value="Ribokinase-like"/>
</dbReference>
<dbReference type="NCBIfam" id="TIGR00097">
    <property type="entry name" value="HMP-P_kinase"/>
    <property type="match status" value="1"/>
</dbReference>
<dbReference type="PANTHER" id="PTHR20858:SF17">
    <property type="entry name" value="HYDROXYMETHYLPYRIMIDINE_PHOSPHOMETHYLPYRIMIDINE KINASE THI20-RELATED"/>
    <property type="match status" value="1"/>
</dbReference>
<dbReference type="PANTHER" id="PTHR20858">
    <property type="entry name" value="PHOSPHOMETHYLPYRIMIDINE KINASE"/>
    <property type="match status" value="1"/>
</dbReference>
<dbReference type="Pfam" id="PF08543">
    <property type="entry name" value="Phos_pyr_kin"/>
    <property type="match status" value="1"/>
</dbReference>
<dbReference type="SUPFAM" id="SSF53613">
    <property type="entry name" value="Ribokinase-like"/>
    <property type="match status" value="1"/>
</dbReference>
<protein>
    <recommendedName>
        <fullName>Hydroxymethylpyrimidine/phosphomethylpyrimidine kinase</fullName>
        <ecNumber evidence="2">2.7.1.49</ecNumber>
        <ecNumber evidence="2">2.7.4.7</ecNumber>
    </recommendedName>
    <alternativeName>
        <fullName>Hydroxymethylpyrimidine kinase</fullName>
        <shortName>HMP kinase</shortName>
    </alternativeName>
    <alternativeName>
        <fullName>Hydroxymethylpyrimidine phosphate kinase</fullName>
        <shortName>HMP-P kinase</shortName>
        <shortName>HMP-phosphate kinase</shortName>
        <shortName>HMPP kinase</shortName>
    </alternativeName>
</protein>
<comment type="function">
    <text evidence="2">Catalyzes the phosphorylation of hydroxymethylpyrimidine phosphate (HMP-P) to HMP-PP, and of HMP to HMP-P.</text>
</comment>
<comment type="catalytic activity">
    <reaction evidence="2">
        <text>4-amino-5-hydroxymethyl-2-methylpyrimidine + ATP = 4-amino-2-methyl-5-(phosphooxymethyl)pyrimidine + ADP + H(+)</text>
        <dbReference type="Rhea" id="RHEA:23096"/>
        <dbReference type="ChEBI" id="CHEBI:15378"/>
        <dbReference type="ChEBI" id="CHEBI:16892"/>
        <dbReference type="ChEBI" id="CHEBI:30616"/>
        <dbReference type="ChEBI" id="CHEBI:58354"/>
        <dbReference type="ChEBI" id="CHEBI:456216"/>
        <dbReference type="EC" id="2.7.1.49"/>
    </reaction>
</comment>
<comment type="catalytic activity">
    <reaction evidence="2">
        <text>4-amino-2-methyl-5-(phosphooxymethyl)pyrimidine + ATP = 4-amino-2-methyl-5-(diphosphooxymethyl)pyrimidine + ADP</text>
        <dbReference type="Rhea" id="RHEA:19893"/>
        <dbReference type="ChEBI" id="CHEBI:30616"/>
        <dbReference type="ChEBI" id="CHEBI:57841"/>
        <dbReference type="ChEBI" id="CHEBI:58354"/>
        <dbReference type="ChEBI" id="CHEBI:456216"/>
        <dbReference type="EC" id="2.7.4.7"/>
    </reaction>
</comment>
<comment type="pathway">
    <text>Cofactor biosynthesis; thiamine diphosphate biosynthesis; 4-amino-2-methyl-5-diphosphomethylpyrimidine from 5-amino-1-(5-phospho-D-ribosyl)imidazole: step 2/3.</text>
</comment>
<comment type="pathway">
    <text>Cofactor biosynthesis; thiamine diphosphate biosynthesis; 4-amino-2-methyl-5-diphosphomethylpyrimidine from 5-amino-1-(5-phospho-D-ribosyl)imidazole: step 3/3.</text>
</comment>
<comment type="miscellaneous">
    <text>Was identified as a high-confidence drug target.</text>
</comment>
<comment type="similarity">
    <text evidence="4">Belongs to the ThiD family.</text>
</comment>
<comment type="sequence caution" evidence="3">
    <conflict type="erroneous initiation">
        <sequence resource="EMBL-CDS" id="CCP43153"/>
    </conflict>
    <text>Truncated N-terminus.</text>
</comment>
<gene>
    <name type="primary">thiD</name>
    <name type="ordered locus">Rv0422c</name>
    <name type="ORF">MTCY22G10.19c</name>
</gene>
<reference key="1">
    <citation type="journal article" date="1998" name="Nature">
        <title>Deciphering the biology of Mycobacterium tuberculosis from the complete genome sequence.</title>
        <authorList>
            <person name="Cole S.T."/>
            <person name="Brosch R."/>
            <person name="Parkhill J."/>
            <person name="Garnier T."/>
            <person name="Churcher C.M."/>
            <person name="Harris D.E."/>
            <person name="Gordon S.V."/>
            <person name="Eiglmeier K."/>
            <person name="Gas S."/>
            <person name="Barry C.E. III"/>
            <person name="Tekaia F."/>
            <person name="Badcock K."/>
            <person name="Basham D."/>
            <person name="Brown D."/>
            <person name="Chillingworth T."/>
            <person name="Connor R."/>
            <person name="Davies R.M."/>
            <person name="Devlin K."/>
            <person name="Feltwell T."/>
            <person name="Gentles S."/>
            <person name="Hamlin N."/>
            <person name="Holroyd S."/>
            <person name="Hornsby T."/>
            <person name="Jagels K."/>
            <person name="Krogh A."/>
            <person name="McLean J."/>
            <person name="Moule S."/>
            <person name="Murphy L.D."/>
            <person name="Oliver S."/>
            <person name="Osborne J."/>
            <person name="Quail M.A."/>
            <person name="Rajandream M.A."/>
            <person name="Rogers J."/>
            <person name="Rutter S."/>
            <person name="Seeger K."/>
            <person name="Skelton S."/>
            <person name="Squares S."/>
            <person name="Squares R."/>
            <person name="Sulston J.E."/>
            <person name="Taylor K."/>
            <person name="Whitehead S."/>
            <person name="Barrell B.G."/>
        </authorList>
    </citation>
    <scope>NUCLEOTIDE SEQUENCE [LARGE SCALE GENOMIC DNA]</scope>
    <source>
        <strain>ATCC 25618 / H37Rv</strain>
    </source>
</reference>
<reference key="2">
    <citation type="journal article" date="2022" name="Genomics">
        <title>Deep N-terminomics of Mycobacterium tuberculosis H37Rv extensively correct annotated encoding genes.</title>
        <authorList>
            <person name="Shi J."/>
            <person name="Meng S."/>
            <person name="Wan L."/>
            <person name="Zhang Z."/>
            <person name="Jiang S."/>
            <person name="Zhu H."/>
            <person name="Dai E."/>
            <person name="Chang L."/>
            <person name="Gao H."/>
            <person name="Wan K."/>
            <person name="Zhang L."/>
            <person name="Zhao X."/>
            <person name="Liu H."/>
            <person name="Lyu Z."/>
            <person name="Zhang Y."/>
            <person name="Xu P."/>
        </authorList>
    </citation>
    <scope>PROTEIN SEQUENCE OF 2-15</scope>
    <scope>SEQUENCE REVISION TO N-TERMINUS</scope>
    <source>
        <strain>H37Rv</strain>
    </source>
</reference>
<reference key="3">
    <citation type="journal article" date="2008" name="BMC Syst. Biol.">
        <title>targetTB: a target identification pipeline for Mycobacterium tuberculosis through an interactome, reactome and genome-scale structural analysis.</title>
        <authorList>
            <person name="Raman K."/>
            <person name="Yeturu K."/>
            <person name="Chandra N."/>
        </authorList>
    </citation>
    <scope>IDENTIFICATION AS A DRUG TARGET [LARGE SCALE ANALYSIS]</scope>
</reference>
<reference key="4">
    <citation type="journal article" date="2011" name="Mol. Cell. Proteomics">
        <title>Proteogenomic analysis of Mycobacterium tuberculosis by high resolution mass spectrometry.</title>
        <authorList>
            <person name="Kelkar D.S."/>
            <person name="Kumar D."/>
            <person name="Kumar P."/>
            <person name="Balakrishnan L."/>
            <person name="Muthusamy B."/>
            <person name="Yadav A.K."/>
            <person name="Shrivastava P."/>
            <person name="Marimuthu A."/>
            <person name="Anand S."/>
            <person name="Sundaram H."/>
            <person name="Kingsbury R."/>
            <person name="Harsha H.C."/>
            <person name="Nair B."/>
            <person name="Prasad T.S."/>
            <person name="Chauhan D.S."/>
            <person name="Katoch K."/>
            <person name="Katoch V.M."/>
            <person name="Kumar P."/>
            <person name="Chaerkady R."/>
            <person name="Ramachandran S."/>
            <person name="Dash D."/>
            <person name="Pandey A."/>
        </authorList>
    </citation>
    <scope>IDENTIFICATION BY MASS SPECTROMETRY [LARGE SCALE ANALYSIS]</scope>
    <source>
        <strain>ATCC 25618 / H37Rv</strain>
    </source>
</reference>